<feature type="initiator methionine" description="Removed; by host" evidence="1">
    <location>
        <position position="1"/>
    </location>
</feature>
<feature type="chain" id="PRO_0000115932" description="Cytoplasmic envelopment protein 3" evidence="1">
    <location>
        <begin position="2"/>
        <end position="81"/>
    </location>
</feature>
<feature type="region of interest" description="Asp/Glu-rich (acidic)" evidence="1">
    <location>
        <begin position="41"/>
        <end position="47"/>
    </location>
</feature>
<feature type="region of interest" description="Disordered" evidence="2">
    <location>
        <begin position="47"/>
        <end position="81"/>
    </location>
</feature>
<feature type="short sequence motif" description="Di-leucine-like internalization motif" evidence="1">
    <location>
        <begin position="22"/>
        <end position="23"/>
    </location>
</feature>
<feature type="compositionally biased region" description="Basic residues" evidence="2">
    <location>
        <begin position="66"/>
        <end position="81"/>
    </location>
</feature>
<feature type="lipid moiety-binding region" description="N-myristoyl glycine; by host" evidence="1">
    <location>
        <position position="2"/>
    </location>
</feature>
<reference key="1">
    <citation type="journal article" date="1986" name="J. Gen. Virol.">
        <title>The complete DNA sequence of varicella-zoster virus.</title>
        <authorList>
            <person name="Davison A.J."/>
            <person name="Scott J.E."/>
        </authorList>
    </citation>
    <scope>NUCLEOTIDE SEQUENCE [LARGE SCALE GENOMIC DNA]</scope>
</reference>
<gene>
    <name type="ORF">ORF49</name>
</gene>
<dbReference type="EMBL" id="X04370">
    <property type="protein sequence ID" value="CAA27932.1"/>
    <property type="molecule type" value="Genomic_DNA"/>
</dbReference>
<dbReference type="PIR" id="E27344">
    <property type="entry name" value="WZBE49"/>
</dbReference>
<dbReference type="Proteomes" id="UP000002602">
    <property type="component" value="Genome"/>
</dbReference>
<dbReference type="GO" id="GO:0044178">
    <property type="term" value="C:host cell Golgi membrane"/>
    <property type="evidence" value="ECO:0007669"/>
    <property type="project" value="UniProtKB-SubCell"/>
</dbReference>
<dbReference type="GO" id="GO:0020002">
    <property type="term" value="C:host cell plasma membrane"/>
    <property type="evidence" value="ECO:0007669"/>
    <property type="project" value="UniProtKB-SubCell"/>
</dbReference>
<dbReference type="GO" id="GO:0016020">
    <property type="term" value="C:membrane"/>
    <property type="evidence" value="ECO:0007669"/>
    <property type="project" value="UniProtKB-KW"/>
</dbReference>
<dbReference type="GO" id="GO:0019033">
    <property type="term" value="C:viral tegument"/>
    <property type="evidence" value="ECO:0007669"/>
    <property type="project" value="UniProtKB-SubCell"/>
</dbReference>
<dbReference type="GO" id="GO:0055036">
    <property type="term" value="C:virion membrane"/>
    <property type="evidence" value="ECO:0007669"/>
    <property type="project" value="UniProtKB-SubCell"/>
</dbReference>
<dbReference type="GO" id="GO:0009653">
    <property type="term" value="P:anatomical structure morphogenesis"/>
    <property type="evidence" value="ECO:0007669"/>
    <property type="project" value="UniProtKB-UniRule"/>
</dbReference>
<dbReference type="GO" id="GO:0046760">
    <property type="term" value="P:viral budding from Golgi membrane"/>
    <property type="evidence" value="ECO:0007669"/>
    <property type="project" value="UniProtKB-UniRule"/>
</dbReference>
<dbReference type="HAMAP" id="MF_04040">
    <property type="entry name" value="HSV_CEP3_alphahv"/>
    <property type="match status" value="1"/>
</dbReference>
<dbReference type="InterPro" id="IPR024351">
    <property type="entry name" value="Tegument_UL11_Herpesvir"/>
</dbReference>
<dbReference type="Pfam" id="PF11094">
    <property type="entry name" value="UL11"/>
    <property type="match status" value="1"/>
</dbReference>
<sequence length="81" mass="8908">MGQSSSSGRGGICGLCKRYNELVTCNGETVALNSEFFEDFDFDENVTEDADKSTQRRPRVIDVTPKRKPSGKSSHSKCAKC</sequence>
<proteinExistence type="inferred from homology"/>
<name>CEP3_VZVD</name>
<protein>
    <recommendedName>
        <fullName evidence="1">Cytoplasmic envelopment protein 3</fullName>
    </recommendedName>
</protein>
<keyword id="KW-1032">Host cell membrane</keyword>
<keyword id="KW-1040">Host Golgi apparatus</keyword>
<keyword id="KW-1043">Host membrane</keyword>
<keyword id="KW-0449">Lipoprotein</keyword>
<keyword id="KW-0472">Membrane</keyword>
<keyword id="KW-0519">Myristate</keyword>
<keyword id="KW-0564">Palmitate</keyword>
<keyword id="KW-0597">Phosphoprotein</keyword>
<keyword id="KW-1185">Reference proteome</keyword>
<keyword id="KW-0946">Virion</keyword>
<keyword id="KW-0920">Virion tegument</keyword>
<organismHost>
    <name type="scientific">Homo sapiens</name>
    <name type="common">Human</name>
    <dbReference type="NCBI Taxonomy" id="9606"/>
</organismHost>
<organism>
    <name type="scientific">Varicella-zoster virus (strain Dumas)</name>
    <name type="common">HHV-3</name>
    <name type="synonym">Human herpesvirus 3</name>
    <dbReference type="NCBI Taxonomy" id="10338"/>
    <lineage>
        <taxon>Viruses</taxon>
        <taxon>Duplodnaviria</taxon>
        <taxon>Heunggongvirae</taxon>
        <taxon>Peploviricota</taxon>
        <taxon>Herviviricetes</taxon>
        <taxon>Herpesvirales</taxon>
        <taxon>Orthoherpesviridae</taxon>
        <taxon>Alphaherpesvirinae</taxon>
        <taxon>Varicellovirus</taxon>
        <taxon>Varicellovirus humanalpha3</taxon>
        <taxon>Human herpesvirus 3</taxon>
    </lineage>
</organism>
<comment type="function">
    <text evidence="1">Plays an important role in the cytoplasmic envelopment of tegument proteins and capsids during the assembly and egress processes. Also participates in viral entry at the fusion step probably by regulating the core fusion machinery.</text>
</comment>
<comment type="subunit">
    <text evidence="1">Interacts with cytoplasmic envelopment protein 2; this interaction is essential for the proper localization of each protein to the assembly complex and thus for the production of infectious virus.</text>
</comment>
<comment type="subcellular location">
    <subcellularLocation>
        <location evidence="1">Virion tegument</location>
    </subcellularLocation>
    <subcellularLocation>
        <location evidence="1">Virion membrane</location>
        <topology evidence="1">Lipid-anchor</topology>
    </subcellularLocation>
    <subcellularLocation>
        <location evidence="1">Host cell membrane</location>
        <topology evidence="1">Lipid-anchor</topology>
        <orientation evidence="1">Cytoplasmic side</orientation>
    </subcellularLocation>
    <subcellularLocation>
        <location evidence="1">Host Golgi apparatus membrane</location>
        <topology evidence="1">Lipid-anchor</topology>
        <orientation evidence="1">Cytoplasmic side</orientation>
    </subcellularLocation>
    <text evidence="1">Virion membrane-associated tegument protein. Associates with host membrane lipids rafts. During virion morphogenesis, this protein probably accumulates in the endosomes and trans-Golgi where secondary envelopment occurs. It is probably transported to the cell surface from where it is endocytosed and directed to the trans-Golgi network (TGN).</text>
</comment>
<comment type="PTM">
    <text evidence="1">Myristoylation and palmitoylation (probably on one or more of the nearby cysteines at the N-terminus) enable membrane-binding and Golgi apparatus-specific targeting and are essential for efficient packaging.</text>
</comment>
<comment type="PTM">
    <text evidence="1">Phosphorylated. Phosphorylation does not seem to be required for recycling to the host Golgi apparatus. Packaging is selective for underphosphorylated forms.</text>
</comment>
<comment type="similarity">
    <text evidence="1">Belongs to the herpesviridae cytoplasmic envelopment protein 3 family.</text>
</comment>
<evidence type="ECO:0000255" key="1">
    <source>
        <dbReference type="HAMAP-Rule" id="MF_04040"/>
    </source>
</evidence>
<evidence type="ECO:0000256" key="2">
    <source>
        <dbReference type="SAM" id="MobiDB-lite"/>
    </source>
</evidence>
<accession>P09297</accession>